<sequence>MDPNCSCAAGDSCTCAGSCKCKECKCTSCKKSCCSCCPVGCAKCAQGCICKGASDKCSCCA</sequence>
<gene>
    <name type="primary">MT2</name>
</gene>
<dbReference type="EMBL" id="CR925933">
    <property type="protein sequence ID" value="CAI29593.1"/>
    <property type="molecule type" value="mRNA"/>
</dbReference>
<dbReference type="RefSeq" id="NP_001127065.1">
    <property type="nucleotide sequence ID" value="NM_001133593.2"/>
</dbReference>
<dbReference type="BMRB" id="Q5NVS0"/>
<dbReference type="SMR" id="Q5NVS0"/>
<dbReference type="FunCoup" id="Q5NVS0">
    <property type="interactions" value="34"/>
</dbReference>
<dbReference type="STRING" id="9601.ENSPPYP00000008327"/>
<dbReference type="Ensembl" id="ENSPPYT00000009031.2">
    <property type="protein sequence ID" value="ENSPPYP00000008678.2"/>
    <property type="gene ID" value="ENSPPYG00000038311.1"/>
</dbReference>
<dbReference type="GeneID" id="100174095"/>
<dbReference type="KEGG" id="pon:100174095"/>
<dbReference type="CTD" id="4502"/>
<dbReference type="eggNOG" id="KOG4738">
    <property type="taxonomic scope" value="Eukaryota"/>
</dbReference>
<dbReference type="GeneTree" id="ENSGT00950000182967"/>
<dbReference type="HOGENOM" id="CLU_171204_2_0_1"/>
<dbReference type="InParanoid" id="Q5NVS0"/>
<dbReference type="OMA" id="KECKCSS"/>
<dbReference type="TreeFam" id="TF336054"/>
<dbReference type="Proteomes" id="UP000001595">
    <property type="component" value="Chromosome 16"/>
</dbReference>
<dbReference type="GO" id="GO:0005737">
    <property type="term" value="C:cytoplasm"/>
    <property type="evidence" value="ECO:0000250"/>
    <property type="project" value="UniProtKB"/>
</dbReference>
<dbReference type="GO" id="GO:0005634">
    <property type="term" value="C:nucleus"/>
    <property type="evidence" value="ECO:0000250"/>
    <property type="project" value="UniProtKB"/>
</dbReference>
<dbReference type="GO" id="GO:0008270">
    <property type="term" value="F:zinc ion binding"/>
    <property type="evidence" value="ECO:0000250"/>
    <property type="project" value="UniProtKB"/>
</dbReference>
<dbReference type="GO" id="GO:0071276">
    <property type="term" value="P:cellular response to cadmium ion"/>
    <property type="evidence" value="ECO:0007669"/>
    <property type="project" value="TreeGrafter"/>
</dbReference>
<dbReference type="GO" id="GO:0071280">
    <property type="term" value="P:cellular response to copper ion"/>
    <property type="evidence" value="ECO:0007669"/>
    <property type="project" value="TreeGrafter"/>
</dbReference>
<dbReference type="GO" id="GO:0036018">
    <property type="term" value="P:cellular response to erythropoietin"/>
    <property type="evidence" value="ECO:0007669"/>
    <property type="project" value="Ensembl"/>
</dbReference>
<dbReference type="GO" id="GO:0036016">
    <property type="term" value="P:cellular response to interleukin-3"/>
    <property type="evidence" value="ECO:0007669"/>
    <property type="project" value="Ensembl"/>
</dbReference>
<dbReference type="GO" id="GO:0071294">
    <property type="term" value="P:cellular response to zinc ion"/>
    <property type="evidence" value="ECO:0000250"/>
    <property type="project" value="UniProtKB"/>
</dbReference>
<dbReference type="GO" id="GO:0010273">
    <property type="term" value="P:detoxification of copper ion"/>
    <property type="evidence" value="ECO:0007669"/>
    <property type="project" value="TreeGrafter"/>
</dbReference>
<dbReference type="GO" id="GO:0006882">
    <property type="term" value="P:intracellular zinc ion homeostasis"/>
    <property type="evidence" value="ECO:0007669"/>
    <property type="project" value="TreeGrafter"/>
</dbReference>
<dbReference type="GO" id="GO:0045926">
    <property type="term" value="P:negative regulation of growth"/>
    <property type="evidence" value="ECO:0000250"/>
    <property type="project" value="UniProtKB"/>
</dbReference>
<dbReference type="FunFam" id="4.10.10.10:FF:000001">
    <property type="entry name" value="Metallothionein"/>
    <property type="match status" value="1"/>
</dbReference>
<dbReference type="Gene3D" id="4.10.10.10">
    <property type="entry name" value="Metallothionein Isoform II"/>
    <property type="match status" value="1"/>
</dbReference>
<dbReference type="InterPro" id="IPR017854">
    <property type="entry name" value="Metalthion_dom_sf"/>
</dbReference>
<dbReference type="InterPro" id="IPR023587">
    <property type="entry name" value="Metalthion_dom_sf_vert"/>
</dbReference>
<dbReference type="InterPro" id="IPR000006">
    <property type="entry name" value="Metalthion_vert"/>
</dbReference>
<dbReference type="InterPro" id="IPR018064">
    <property type="entry name" value="Metalthion_vert_metal_BS"/>
</dbReference>
<dbReference type="PANTHER" id="PTHR23299">
    <property type="entry name" value="METALLOTHIONEIN"/>
    <property type="match status" value="1"/>
</dbReference>
<dbReference type="PANTHER" id="PTHR23299:SF22">
    <property type="entry name" value="METALLOTHIONEIN-1G"/>
    <property type="match status" value="1"/>
</dbReference>
<dbReference type="Pfam" id="PF00131">
    <property type="entry name" value="Metallothio"/>
    <property type="match status" value="1"/>
</dbReference>
<dbReference type="PRINTS" id="PR00860">
    <property type="entry name" value="MTVERTEBRATE"/>
</dbReference>
<dbReference type="SUPFAM" id="SSF57868">
    <property type="entry name" value="Metallothionein"/>
    <property type="match status" value="1"/>
</dbReference>
<dbReference type="PROSITE" id="PS00203">
    <property type="entry name" value="METALLOTHIONEIN_VRT"/>
    <property type="match status" value="1"/>
</dbReference>
<feature type="chain" id="PRO_0000197247" description="Metallothionein-2">
    <location>
        <begin position="1"/>
        <end position="61"/>
    </location>
</feature>
<feature type="region of interest" description="Beta">
    <location>
        <begin position="1"/>
        <end position="29"/>
    </location>
</feature>
<feature type="region of interest" description="Antigenic epitope">
    <location>
        <begin position="20"/>
        <end position="25"/>
    </location>
</feature>
<feature type="region of interest" description="Alpha">
    <location>
        <begin position="30"/>
        <end position="61"/>
    </location>
</feature>
<feature type="binding site" evidence="1">
    <location>
        <position position="5"/>
    </location>
    <ligand>
        <name>a divalent metal cation</name>
        <dbReference type="ChEBI" id="CHEBI:60240"/>
        <label>1</label>
        <note>in cluster B</note>
    </ligand>
</feature>
<feature type="binding site" evidence="1">
    <location>
        <position position="7"/>
    </location>
    <ligand>
        <name>a divalent metal cation</name>
        <dbReference type="ChEBI" id="CHEBI:60240"/>
        <label>1</label>
        <note>in cluster B</note>
    </ligand>
</feature>
<feature type="binding site" evidence="1">
    <location>
        <position position="7"/>
    </location>
    <ligand>
        <name>a divalent metal cation</name>
        <dbReference type="ChEBI" id="CHEBI:60240"/>
        <label>2</label>
        <note>in cluster B</note>
    </ligand>
</feature>
<feature type="binding site" evidence="1">
    <location>
        <position position="13"/>
    </location>
    <ligand>
        <name>a divalent metal cation</name>
        <dbReference type="ChEBI" id="CHEBI:60240"/>
        <label>2</label>
        <note>in cluster B</note>
    </ligand>
</feature>
<feature type="binding site" evidence="1">
    <location>
        <position position="15"/>
    </location>
    <ligand>
        <name>a divalent metal cation</name>
        <dbReference type="ChEBI" id="CHEBI:60240"/>
        <label>2</label>
        <note>in cluster B</note>
    </ligand>
</feature>
<feature type="binding site" evidence="1">
    <location>
        <position position="15"/>
    </location>
    <ligand>
        <name>a divalent metal cation</name>
        <dbReference type="ChEBI" id="CHEBI:60240"/>
        <label>3</label>
        <note>in cluster B</note>
    </ligand>
</feature>
<feature type="binding site" evidence="1">
    <location>
        <position position="19"/>
    </location>
    <ligand>
        <name>a divalent metal cation</name>
        <dbReference type="ChEBI" id="CHEBI:60240"/>
        <label>3</label>
        <note>in cluster B</note>
    </ligand>
</feature>
<feature type="binding site" evidence="1">
    <location>
        <position position="21"/>
    </location>
    <ligand>
        <name>a divalent metal cation</name>
        <dbReference type="ChEBI" id="CHEBI:60240"/>
        <label>1</label>
        <note>in cluster B</note>
    </ligand>
</feature>
<feature type="binding site" evidence="1">
    <location>
        <position position="24"/>
    </location>
    <ligand>
        <name>a divalent metal cation</name>
        <dbReference type="ChEBI" id="CHEBI:60240"/>
        <label>1</label>
        <note>in cluster B</note>
    </ligand>
</feature>
<feature type="binding site" evidence="1">
    <location>
        <position position="24"/>
    </location>
    <ligand>
        <name>a divalent metal cation</name>
        <dbReference type="ChEBI" id="CHEBI:60240"/>
        <label>3</label>
        <note>in cluster B</note>
    </ligand>
</feature>
<feature type="binding site" evidence="1">
    <location>
        <position position="26"/>
    </location>
    <ligand>
        <name>a divalent metal cation</name>
        <dbReference type="ChEBI" id="CHEBI:60240"/>
        <label>2</label>
        <note>in cluster B</note>
    </ligand>
</feature>
<feature type="binding site" evidence="1">
    <location>
        <position position="29"/>
    </location>
    <ligand>
        <name>a divalent metal cation</name>
        <dbReference type="ChEBI" id="CHEBI:60240"/>
        <label>3</label>
        <note>in cluster B</note>
    </ligand>
</feature>
<feature type="binding site" evidence="1">
    <location>
        <position position="33"/>
    </location>
    <ligand>
        <name>a divalent metal cation</name>
        <dbReference type="ChEBI" id="CHEBI:60240"/>
        <label>4</label>
        <note>in cluster A</note>
    </ligand>
</feature>
<feature type="binding site" evidence="1">
    <location>
        <position position="34"/>
    </location>
    <ligand>
        <name>a divalent metal cation</name>
        <dbReference type="ChEBI" id="CHEBI:60240"/>
        <label>4</label>
        <note>in cluster A</note>
    </ligand>
</feature>
<feature type="binding site" evidence="1">
    <location>
        <position position="34"/>
    </location>
    <ligand>
        <name>a divalent metal cation</name>
        <dbReference type="ChEBI" id="CHEBI:60240"/>
        <label>5</label>
        <note>in cluster A</note>
    </ligand>
</feature>
<feature type="binding site" evidence="1">
    <location>
        <position position="36"/>
    </location>
    <ligand>
        <name>a divalent metal cation</name>
        <dbReference type="ChEBI" id="CHEBI:60240"/>
        <label>5</label>
        <note>in cluster A</note>
    </ligand>
</feature>
<feature type="binding site" evidence="1">
    <location>
        <position position="37"/>
    </location>
    <ligand>
        <name>a divalent metal cation</name>
        <dbReference type="ChEBI" id="CHEBI:60240"/>
        <label>5</label>
        <note>in cluster A</note>
    </ligand>
</feature>
<feature type="binding site" evidence="1">
    <location>
        <position position="37"/>
    </location>
    <ligand>
        <name>a divalent metal cation</name>
        <dbReference type="ChEBI" id="CHEBI:60240"/>
        <label>6</label>
        <note>in cluster A</note>
    </ligand>
</feature>
<feature type="binding site" evidence="1">
    <location>
        <position position="41"/>
    </location>
    <ligand>
        <name>a divalent metal cation</name>
        <dbReference type="ChEBI" id="CHEBI:60240"/>
        <label>6</label>
        <note>in cluster A</note>
    </ligand>
</feature>
<feature type="binding site" evidence="1">
    <location>
        <position position="44"/>
    </location>
    <ligand>
        <name>a divalent metal cation</name>
        <dbReference type="ChEBI" id="CHEBI:60240"/>
        <label>4</label>
        <note>in cluster A</note>
    </ligand>
</feature>
<feature type="binding site" evidence="1">
    <location>
        <position position="44"/>
    </location>
    <ligand>
        <name>a divalent metal cation</name>
        <dbReference type="ChEBI" id="CHEBI:60240"/>
        <label>6</label>
        <note>in cluster A</note>
    </ligand>
</feature>
<feature type="binding site" evidence="1">
    <location>
        <position position="48"/>
    </location>
    <ligand>
        <name>a divalent metal cation</name>
        <dbReference type="ChEBI" id="CHEBI:60240"/>
        <label>4</label>
        <note>in cluster A</note>
    </ligand>
</feature>
<feature type="binding site" evidence="1">
    <location>
        <position position="50"/>
    </location>
    <ligand>
        <name>a divalent metal cation</name>
        <dbReference type="ChEBI" id="CHEBI:60240"/>
        <label>5</label>
        <note>in cluster A</note>
    </ligand>
</feature>
<feature type="binding site" evidence="1">
    <location>
        <position position="50"/>
    </location>
    <ligand>
        <name>a divalent metal cation</name>
        <dbReference type="ChEBI" id="CHEBI:60240"/>
        <label>7</label>
        <note>in cluster A</note>
    </ligand>
</feature>
<feature type="binding site" evidence="1">
    <location>
        <position position="57"/>
    </location>
    <ligand>
        <name>a divalent metal cation</name>
        <dbReference type="ChEBI" id="CHEBI:60240"/>
        <label>7</label>
        <note>in cluster A</note>
    </ligand>
</feature>
<feature type="binding site" evidence="1">
    <location>
        <position position="59"/>
    </location>
    <ligand>
        <name>a divalent metal cation</name>
        <dbReference type="ChEBI" id="CHEBI:60240"/>
        <label>7</label>
        <note>in cluster A</note>
    </ligand>
</feature>
<feature type="binding site" evidence="1">
    <location>
        <position position="60"/>
    </location>
    <ligand>
        <name>a divalent metal cation</name>
        <dbReference type="ChEBI" id="CHEBI:60240"/>
        <label>6</label>
        <note>in cluster A</note>
    </ligand>
</feature>
<feature type="binding site" evidence="1">
    <location>
        <position position="60"/>
    </location>
    <ligand>
        <name>a divalent metal cation</name>
        <dbReference type="ChEBI" id="CHEBI:60240"/>
        <label>7</label>
        <note>in cluster A</note>
    </ligand>
</feature>
<feature type="modified residue" description="N-acetylmethionine" evidence="2">
    <location>
        <position position="1"/>
    </location>
</feature>
<feature type="modified residue" description="Phosphoserine" evidence="1">
    <location>
        <position position="58"/>
    </location>
</feature>
<organism>
    <name type="scientific">Pongo abelii</name>
    <name type="common">Sumatran orangutan</name>
    <name type="synonym">Pongo pygmaeus abelii</name>
    <dbReference type="NCBI Taxonomy" id="9601"/>
    <lineage>
        <taxon>Eukaryota</taxon>
        <taxon>Metazoa</taxon>
        <taxon>Chordata</taxon>
        <taxon>Craniata</taxon>
        <taxon>Vertebrata</taxon>
        <taxon>Euteleostomi</taxon>
        <taxon>Mammalia</taxon>
        <taxon>Eutheria</taxon>
        <taxon>Euarchontoglires</taxon>
        <taxon>Primates</taxon>
        <taxon>Haplorrhini</taxon>
        <taxon>Catarrhini</taxon>
        <taxon>Hominidae</taxon>
        <taxon>Pongo</taxon>
    </lineage>
</organism>
<reference key="1">
    <citation type="submission" date="2004-11" db="EMBL/GenBank/DDBJ databases">
        <authorList>
            <consortium name="The German cDNA consortium"/>
        </authorList>
    </citation>
    <scope>NUCLEOTIDE SEQUENCE [LARGE SCALE MRNA]</scope>
    <source>
        <tissue>Liver</tissue>
    </source>
</reference>
<comment type="function">
    <text>Metallothioneins have a high content of cysteine residues that bind various heavy metals; these proteins are transcriptionally regulated by both heavy metals and glucocorticoids.</text>
</comment>
<comment type="domain">
    <text>Class I metallothioneins contain 2 metal-binding domains: four divalent ions are chelated within cluster A of the alpha domain and are coordinated via cysteinyl thiolate bridges to 11 cysteine ligands. Cluster B, the corresponding region within the beta domain, can ligate three divalent ions to 9 cysteines.</text>
</comment>
<comment type="miscellaneous">
    <text>This metallothionein binds zinc.</text>
</comment>
<comment type="similarity">
    <text evidence="3">Belongs to the metallothionein superfamily. Type 1 family.</text>
</comment>
<accession>Q5NVS0</accession>
<proteinExistence type="inferred from homology"/>
<name>MT2_PONAB</name>
<protein>
    <recommendedName>
        <fullName>Metallothionein-2</fullName>
        <shortName>MT-2</shortName>
    </recommendedName>
    <alternativeName>
        <fullName>Metallothionein-II</fullName>
        <shortName>MT-II</shortName>
    </alternativeName>
</protein>
<evidence type="ECO:0000250" key="1">
    <source>
        <dbReference type="UniProtKB" id="P02795"/>
    </source>
</evidence>
<evidence type="ECO:0000250" key="2">
    <source>
        <dbReference type="UniProtKB" id="P68301"/>
    </source>
</evidence>
<evidence type="ECO:0000305" key="3"/>
<keyword id="KW-0007">Acetylation</keyword>
<keyword id="KW-0104">Cadmium</keyword>
<keyword id="KW-0479">Metal-binding</keyword>
<keyword id="KW-0480">Metal-thiolate cluster</keyword>
<keyword id="KW-0597">Phosphoprotein</keyword>
<keyword id="KW-1185">Reference proteome</keyword>
<keyword id="KW-0862">Zinc</keyword>